<comment type="function">
    <text evidence="1">Catalyzes the NADPH-dependent reduction of 7-cyano-7-deazaguanine (preQ0) to 7-aminomethyl-7-deazaguanine (preQ1).</text>
</comment>
<comment type="catalytic activity">
    <reaction evidence="1">
        <text>7-aminomethyl-7-carbaguanine + 2 NADP(+) = 7-cyano-7-deazaguanine + 2 NADPH + 3 H(+)</text>
        <dbReference type="Rhea" id="RHEA:13409"/>
        <dbReference type="ChEBI" id="CHEBI:15378"/>
        <dbReference type="ChEBI" id="CHEBI:45075"/>
        <dbReference type="ChEBI" id="CHEBI:57783"/>
        <dbReference type="ChEBI" id="CHEBI:58349"/>
        <dbReference type="ChEBI" id="CHEBI:58703"/>
        <dbReference type="EC" id="1.7.1.13"/>
    </reaction>
</comment>
<comment type="pathway">
    <text evidence="1">tRNA modification; tRNA-queuosine biosynthesis.</text>
</comment>
<comment type="subunit">
    <text evidence="1">Homodimer.</text>
</comment>
<comment type="subcellular location">
    <subcellularLocation>
        <location evidence="1">Cytoplasm</location>
    </subcellularLocation>
</comment>
<comment type="similarity">
    <text evidence="1">Belongs to the GTP cyclohydrolase I family. QueF type 2 subfamily.</text>
</comment>
<gene>
    <name evidence="1" type="primary">queF</name>
    <name type="ordered locus">LPC_2678</name>
</gene>
<keyword id="KW-0963">Cytoplasm</keyword>
<keyword id="KW-0521">NADP</keyword>
<keyword id="KW-0560">Oxidoreductase</keyword>
<keyword id="KW-0671">Queuosine biosynthesis</keyword>
<reference key="1">
    <citation type="submission" date="2006-11" db="EMBL/GenBank/DDBJ databases">
        <title>Identification and characterization of a new conjugation/ type IVA secretion system (trb/tra) of L. pneumophila Corby localized on a mobile genomic island.</title>
        <authorList>
            <person name="Gloeckner G."/>
            <person name="Albert-Weissenberger C."/>
            <person name="Weinmann E."/>
            <person name="Jacobi S."/>
            <person name="Schunder E."/>
            <person name="Steinert M."/>
            <person name="Buchrieser C."/>
            <person name="Hacker J."/>
            <person name="Heuner K."/>
        </authorList>
    </citation>
    <scope>NUCLEOTIDE SEQUENCE [LARGE SCALE GENOMIC DNA]</scope>
    <source>
        <strain>Corby</strain>
    </source>
</reference>
<organism>
    <name type="scientific">Legionella pneumophila (strain Corby)</name>
    <dbReference type="NCBI Taxonomy" id="400673"/>
    <lineage>
        <taxon>Bacteria</taxon>
        <taxon>Pseudomonadati</taxon>
        <taxon>Pseudomonadota</taxon>
        <taxon>Gammaproteobacteria</taxon>
        <taxon>Legionellales</taxon>
        <taxon>Legionellaceae</taxon>
        <taxon>Legionella</taxon>
    </lineage>
</organism>
<dbReference type="EC" id="1.7.1.13" evidence="1"/>
<dbReference type="EMBL" id="CP000675">
    <property type="protein sequence ID" value="ABQ56591.1"/>
    <property type="molecule type" value="Genomic_DNA"/>
</dbReference>
<dbReference type="RefSeq" id="WP_011945780.1">
    <property type="nucleotide sequence ID" value="NC_009494.2"/>
</dbReference>
<dbReference type="SMR" id="A5IGU1"/>
<dbReference type="KEGG" id="lpc:LPC_2678"/>
<dbReference type="HOGENOM" id="CLU_054738_0_0_6"/>
<dbReference type="UniPathway" id="UPA00392"/>
<dbReference type="GO" id="GO:0005737">
    <property type="term" value="C:cytoplasm"/>
    <property type="evidence" value="ECO:0007669"/>
    <property type="project" value="UniProtKB-SubCell"/>
</dbReference>
<dbReference type="GO" id="GO:0033739">
    <property type="term" value="F:preQ1 synthase activity"/>
    <property type="evidence" value="ECO:0007669"/>
    <property type="project" value="UniProtKB-UniRule"/>
</dbReference>
<dbReference type="GO" id="GO:0008616">
    <property type="term" value="P:queuosine biosynthetic process"/>
    <property type="evidence" value="ECO:0007669"/>
    <property type="project" value="UniProtKB-UniRule"/>
</dbReference>
<dbReference type="GO" id="GO:0006400">
    <property type="term" value="P:tRNA modification"/>
    <property type="evidence" value="ECO:0007669"/>
    <property type="project" value="UniProtKB-UniRule"/>
</dbReference>
<dbReference type="Gene3D" id="3.30.1130.10">
    <property type="match status" value="2"/>
</dbReference>
<dbReference type="HAMAP" id="MF_00817">
    <property type="entry name" value="QueF_type2"/>
    <property type="match status" value="1"/>
</dbReference>
<dbReference type="InterPro" id="IPR043133">
    <property type="entry name" value="GTP-CH-I_C/QueF"/>
</dbReference>
<dbReference type="InterPro" id="IPR050084">
    <property type="entry name" value="NADPH_dep_7-cyano-7-deazaG_red"/>
</dbReference>
<dbReference type="InterPro" id="IPR029500">
    <property type="entry name" value="QueF"/>
</dbReference>
<dbReference type="InterPro" id="IPR029139">
    <property type="entry name" value="QueF_N"/>
</dbReference>
<dbReference type="InterPro" id="IPR016428">
    <property type="entry name" value="QueF_type2"/>
</dbReference>
<dbReference type="NCBIfam" id="TIGR03138">
    <property type="entry name" value="QueF"/>
    <property type="match status" value="1"/>
</dbReference>
<dbReference type="PANTHER" id="PTHR34354">
    <property type="entry name" value="NADPH-DEPENDENT 7-CYANO-7-DEAZAGUANINE REDUCTASE"/>
    <property type="match status" value="1"/>
</dbReference>
<dbReference type="PANTHER" id="PTHR34354:SF1">
    <property type="entry name" value="NADPH-DEPENDENT 7-CYANO-7-DEAZAGUANINE REDUCTASE"/>
    <property type="match status" value="1"/>
</dbReference>
<dbReference type="Pfam" id="PF14489">
    <property type="entry name" value="QueF"/>
    <property type="match status" value="1"/>
</dbReference>
<dbReference type="Pfam" id="PF14819">
    <property type="entry name" value="QueF_N"/>
    <property type="match status" value="1"/>
</dbReference>
<dbReference type="PIRSF" id="PIRSF004750">
    <property type="entry name" value="Nitrile_oxidored_YqcD_prd"/>
    <property type="match status" value="1"/>
</dbReference>
<dbReference type="SUPFAM" id="SSF55620">
    <property type="entry name" value="Tetrahydrobiopterin biosynthesis enzymes-like"/>
    <property type="match status" value="1"/>
</dbReference>
<feature type="chain" id="PRO_1000062347" description="NADPH-dependent 7-cyano-7-deazaguanine reductase">
    <location>
        <begin position="1"/>
        <end position="285"/>
    </location>
</feature>
<feature type="active site" description="Thioimide intermediate" evidence="1">
    <location>
        <position position="191"/>
    </location>
</feature>
<feature type="active site" description="Proton donor" evidence="1">
    <location>
        <position position="198"/>
    </location>
</feature>
<feature type="binding site" evidence="1">
    <location>
        <begin position="91"/>
        <end position="93"/>
    </location>
    <ligand>
        <name>substrate</name>
    </ligand>
</feature>
<feature type="binding site" evidence="1">
    <location>
        <begin position="93"/>
        <end position="94"/>
    </location>
    <ligand>
        <name>NADPH</name>
        <dbReference type="ChEBI" id="CHEBI:57783"/>
    </ligand>
</feature>
<feature type="binding site" evidence="1">
    <location>
        <begin position="230"/>
        <end position="231"/>
    </location>
    <ligand>
        <name>substrate</name>
    </ligand>
</feature>
<feature type="binding site" evidence="1">
    <location>
        <begin position="259"/>
        <end position="260"/>
    </location>
    <ligand>
        <name>NADPH</name>
        <dbReference type="ChEBI" id="CHEBI:57783"/>
    </ligand>
</feature>
<name>QUEF_LEGPC</name>
<evidence type="ECO:0000255" key="1">
    <source>
        <dbReference type="HAMAP-Rule" id="MF_00817"/>
    </source>
</evidence>
<accession>A5IGU1</accession>
<sequence>MNKELESIYQNIANQSELGQTANYDSYYNPKRLYPIPRAPKRQEINLDPNSTTFYGFDCWNHYEVSWLNSKGKPVVAMAVISYDCHSPCIIESKSLKLYFNSLNNSTFPDVETVVQTISKDLSYCIGSEVAVNVYPLSDIPNQTIYAAFDGVCLDKLDIECSVYHVMPDFLSTSSELVEEVLYSDLLKSNCLVTNQPDWGSVQIIYKGKKINHEGLLKYLISFRNHNEFHEQCIERIFADIMRFCQPESLTVYGRYTRRGGLDINPIRSTEPCAFDGQNIRLIRQ</sequence>
<protein>
    <recommendedName>
        <fullName evidence="1">NADPH-dependent 7-cyano-7-deazaguanine reductase</fullName>
        <ecNumber evidence="1">1.7.1.13</ecNumber>
    </recommendedName>
    <alternativeName>
        <fullName evidence="1">7-cyano-7-carbaguanine reductase</fullName>
    </alternativeName>
    <alternativeName>
        <fullName evidence="1">NADPH-dependent nitrile oxidoreductase</fullName>
    </alternativeName>
    <alternativeName>
        <fullName evidence="1">PreQ(0) reductase</fullName>
    </alternativeName>
</protein>
<proteinExistence type="inferred from homology"/>